<accession>A6QB59</accession>
<organism>
    <name type="scientific">Sulfurovum sp. (strain NBC37-1)</name>
    <dbReference type="NCBI Taxonomy" id="387093"/>
    <lineage>
        <taxon>Bacteria</taxon>
        <taxon>Pseudomonadati</taxon>
        <taxon>Campylobacterota</taxon>
        <taxon>Epsilonproteobacteria</taxon>
        <taxon>Campylobacterales</taxon>
        <taxon>Sulfurovaceae</taxon>
        <taxon>Sulfurovum</taxon>
    </lineage>
</organism>
<reference key="1">
    <citation type="journal article" date="2007" name="Proc. Natl. Acad. Sci. U.S.A.">
        <title>Deep-sea vent epsilon-proteobacterial genomes provide insights into emergence of pathogens.</title>
        <authorList>
            <person name="Nakagawa S."/>
            <person name="Takaki Y."/>
            <person name="Shimamura S."/>
            <person name="Reysenbach A.-L."/>
            <person name="Takai K."/>
            <person name="Horikoshi K."/>
        </authorList>
    </citation>
    <scope>NUCLEOTIDE SEQUENCE [LARGE SCALE GENOMIC DNA]</scope>
    <source>
        <strain>NBC37-1</strain>
    </source>
</reference>
<proteinExistence type="inferred from homology"/>
<name>ATPB_SULNB</name>
<keyword id="KW-0066">ATP synthesis</keyword>
<keyword id="KW-0067">ATP-binding</keyword>
<keyword id="KW-0997">Cell inner membrane</keyword>
<keyword id="KW-1003">Cell membrane</keyword>
<keyword id="KW-0139">CF(1)</keyword>
<keyword id="KW-0375">Hydrogen ion transport</keyword>
<keyword id="KW-0406">Ion transport</keyword>
<keyword id="KW-0472">Membrane</keyword>
<keyword id="KW-0547">Nucleotide-binding</keyword>
<keyword id="KW-1278">Translocase</keyword>
<keyword id="KW-0813">Transport</keyword>
<feature type="chain" id="PRO_0000339595" description="ATP synthase subunit beta">
    <location>
        <begin position="1"/>
        <end position="466"/>
    </location>
</feature>
<feature type="binding site" evidence="1">
    <location>
        <begin position="152"/>
        <end position="159"/>
    </location>
    <ligand>
        <name>ATP</name>
        <dbReference type="ChEBI" id="CHEBI:30616"/>
    </ligand>
</feature>
<gene>
    <name evidence="1" type="primary">atpD</name>
    <name type="ordered locus">SUN_1771</name>
</gene>
<sequence>MTGKIVQVLGPVIDVDFTDYLPEINEALETTFMFEGKEQKLVLEVAAQLGDNRVRTIAMDMSEGVVRGQEVKATGDSIQVPVGEEVLGRIFNVIGEAIDEAGPVEAKTHWSIHRDPPPFEDQSTKTEVFETGIKVVDLLAPYSKGGKVGLFGGAGVGKTVIIMELINNVAMKHSGYSVFAGVGERTREGNDLYYEMKESNVLDKVALCYGQMSEPPGARNRIALTGLTMAEYFRDEMGLDVLMFIDNIFRFAQSGSEMSALLGRIPSAVGYQPTLSREMGALQERITSTTKGSITSVQAVYVPADDLTDPAPASVFAHLDATTVLNRSIAEKGIYPAVDPLDSTSRMLDPQIIGEEHYNVARGVQQILQKYKDLQDIIAILGMDELSEDDKLVVERARKIEKYLSQPFHVAEVFTGSPGVYVTLEDTIEGFKGLLEGKYDDMNEAAFYMVGNMAEAIAKNDKINAK</sequence>
<protein>
    <recommendedName>
        <fullName evidence="1">ATP synthase subunit beta</fullName>
        <ecNumber evidence="1">7.1.2.2</ecNumber>
    </recommendedName>
    <alternativeName>
        <fullName evidence="1">ATP synthase F1 sector subunit beta</fullName>
    </alternativeName>
    <alternativeName>
        <fullName evidence="1">F-ATPase subunit beta</fullName>
    </alternativeName>
</protein>
<evidence type="ECO:0000255" key="1">
    <source>
        <dbReference type="HAMAP-Rule" id="MF_01347"/>
    </source>
</evidence>
<dbReference type="EC" id="7.1.2.2" evidence="1"/>
<dbReference type="EMBL" id="AP009179">
    <property type="protein sequence ID" value="BAF72718.1"/>
    <property type="molecule type" value="Genomic_DNA"/>
</dbReference>
<dbReference type="RefSeq" id="WP_012083528.1">
    <property type="nucleotide sequence ID" value="NC_009663.1"/>
</dbReference>
<dbReference type="SMR" id="A6QB59"/>
<dbReference type="STRING" id="387093.SUN_1771"/>
<dbReference type="KEGG" id="sun:SUN_1771"/>
<dbReference type="eggNOG" id="COG0055">
    <property type="taxonomic scope" value="Bacteria"/>
</dbReference>
<dbReference type="HOGENOM" id="CLU_022398_0_2_7"/>
<dbReference type="OrthoDB" id="9801639at2"/>
<dbReference type="Proteomes" id="UP000006378">
    <property type="component" value="Chromosome"/>
</dbReference>
<dbReference type="GO" id="GO:0005886">
    <property type="term" value="C:plasma membrane"/>
    <property type="evidence" value="ECO:0007669"/>
    <property type="project" value="UniProtKB-SubCell"/>
</dbReference>
<dbReference type="GO" id="GO:0045259">
    <property type="term" value="C:proton-transporting ATP synthase complex"/>
    <property type="evidence" value="ECO:0007669"/>
    <property type="project" value="UniProtKB-KW"/>
</dbReference>
<dbReference type="GO" id="GO:0005524">
    <property type="term" value="F:ATP binding"/>
    <property type="evidence" value="ECO:0007669"/>
    <property type="project" value="UniProtKB-UniRule"/>
</dbReference>
<dbReference type="GO" id="GO:0016887">
    <property type="term" value="F:ATP hydrolysis activity"/>
    <property type="evidence" value="ECO:0007669"/>
    <property type="project" value="InterPro"/>
</dbReference>
<dbReference type="GO" id="GO:0046933">
    <property type="term" value="F:proton-transporting ATP synthase activity, rotational mechanism"/>
    <property type="evidence" value="ECO:0007669"/>
    <property type="project" value="UniProtKB-UniRule"/>
</dbReference>
<dbReference type="CDD" id="cd18110">
    <property type="entry name" value="ATP-synt_F1_beta_C"/>
    <property type="match status" value="1"/>
</dbReference>
<dbReference type="CDD" id="cd18115">
    <property type="entry name" value="ATP-synt_F1_beta_N"/>
    <property type="match status" value="1"/>
</dbReference>
<dbReference type="CDD" id="cd01133">
    <property type="entry name" value="F1-ATPase_beta_CD"/>
    <property type="match status" value="1"/>
</dbReference>
<dbReference type="FunFam" id="1.10.1140.10:FF:000001">
    <property type="entry name" value="ATP synthase subunit beta"/>
    <property type="match status" value="1"/>
</dbReference>
<dbReference type="FunFam" id="3.40.50.300:FF:000004">
    <property type="entry name" value="ATP synthase subunit beta"/>
    <property type="match status" value="1"/>
</dbReference>
<dbReference type="Gene3D" id="2.40.10.170">
    <property type="match status" value="1"/>
</dbReference>
<dbReference type="Gene3D" id="1.10.1140.10">
    <property type="entry name" value="Bovine Mitochondrial F1-atpase, Atp Synthase Beta Chain, Chain D, domain 3"/>
    <property type="match status" value="1"/>
</dbReference>
<dbReference type="Gene3D" id="3.40.50.300">
    <property type="entry name" value="P-loop containing nucleotide triphosphate hydrolases"/>
    <property type="match status" value="1"/>
</dbReference>
<dbReference type="HAMAP" id="MF_01347">
    <property type="entry name" value="ATP_synth_beta_bact"/>
    <property type="match status" value="1"/>
</dbReference>
<dbReference type="InterPro" id="IPR003593">
    <property type="entry name" value="AAA+_ATPase"/>
</dbReference>
<dbReference type="InterPro" id="IPR055190">
    <property type="entry name" value="ATP-synt_VA_C"/>
</dbReference>
<dbReference type="InterPro" id="IPR005722">
    <property type="entry name" value="ATP_synth_F1_bsu"/>
</dbReference>
<dbReference type="InterPro" id="IPR020003">
    <property type="entry name" value="ATPase_a/bsu_AS"/>
</dbReference>
<dbReference type="InterPro" id="IPR050053">
    <property type="entry name" value="ATPase_alpha/beta_chains"/>
</dbReference>
<dbReference type="InterPro" id="IPR004100">
    <property type="entry name" value="ATPase_F1/V1/A1_a/bsu_N"/>
</dbReference>
<dbReference type="InterPro" id="IPR036121">
    <property type="entry name" value="ATPase_F1/V1/A1_a/bsu_N_sf"/>
</dbReference>
<dbReference type="InterPro" id="IPR000194">
    <property type="entry name" value="ATPase_F1/V1/A1_a/bsu_nucl-bd"/>
</dbReference>
<dbReference type="InterPro" id="IPR024034">
    <property type="entry name" value="ATPase_F1/V1_b/a_C"/>
</dbReference>
<dbReference type="InterPro" id="IPR027417">
    <property type="entry name" value="P-loop_NTPase"/>
</dbReference>
<dbReference type="NCBIfam" id="TIGR01039">
    <property type="entry name" value="atpD"/>
    <property type="match status" value="1"/>
</dbReference>
<dbReference type="PANTHER" id="PTHR15184">
    <property type="entry name" value="ATP SYNTHASE"/>
    <property type="match status" value="1"/>
</dbReference>
<dbReference type="PANTHER" id="PTHR15184:SF71">
    <property type="entry name" value="ATP SYNTHASE SUBUNIT BETA, MITOCHONDRIAL"/>
    <property type="match status" value="1"/>
</dbReference>
<dbReference type="Pfam" id="PF00006">
    <property type="entry name" value="ATP-synt_ab"/>
    <property type="match status" value="1"/>
</dbReference>
<dbReference type="Pfam" id="PF02874">
    <property type="entry name" value="ATP-synt_ab_N"/>
    <property type="match status" value="1"/>
</dbReference>
<dbReference type="Pfam" id="PF22919">
    <property type="entry name" value="ATP-synt_VA_C"/>
    <property type="match status" value="1"/>
</dbReference>
<dbReference type="SMART" id="SM00382">
    <property type="entry name" value="AAA"/>
    <property type="match status" value="1"/>
</dbReference>
<dbReference type="SUPFAM" id="SSF47917">
    <property type="entry name" value="C-terminal domain of alpha and beta subunits of F1 ATP synthase"/>
    <property type="match status" value="1"/>
</dbReference>
<dbReference type="SUPFAM" id="SSF50615">
    <property type="entry name" value="N-terminal domain of alpha and beta subunits of F1 ATP synthase"/>
    <property type="match status" value="1"/>
</dbReference>
<dbReference type="SUPFAM" id="SSF52540">
    <property type="entry name" value="P-loop containing nucleoside triphosphate hydrolases"/>
    <property type="match status" value="1"/>
</dbReference>
<dbReference type="PROSITE" id="PS00152">
    <property type="entry name" value="ATPASE_ALPHA_BETA"/>
    <property type="match status" value="1"/>
</dbReference>
<comment type="function">
    <text evidence="1">Produces ATP from ADP in the presence of a proton gradient across the membrane. The catalytic sites are hosted primarily by the beta subunits.</text>
</comment>
<comment type="catalytic activity">
    <reaction evidence="1">
        <text>ATP + H2O + 4 H(+)(in) = ADP + phosphate + 5 H(+)(out)</text>
        <dbReference type="Rhea" id="RHEA:57720"/>
        <dbReference type="ChEBI" id="CHEBI:15377"/>
        <dbReference type="ChEBI" id="CHEBI:15378"/>
        <dbReference type="ChEBI" id="CHEBI:30616"/>
        <dbReference type="ChEBI" id="CHEBI:43474"/>
        <dbReference type="ChEBI" id="CHEBI:456216"/>
        <dbReference type="EC" id="7.1.2.2"/>
    </reaction>
</comment>
<comment type="subunit">
    <text evidence="1">F-type ATPases have 2 components, CF(1) - the catalytic core - and CF(0) - the membrane proton channel. CF(1) has five subunits: alpha(3), beta(3), gamma(1), delta(1), epsilon(1). CF(0) has three main subunits: a(1), b(2) and c(9-12). The alpha and beta chains form an alternating ring which encloses part of the gamma chain. CF(1) is attached to CF(0) by a central stalk formed by the gamma and epsilon chains, while a peripheral stalk is formed by the delta and b chains.</text>
</comment>
<comment type="subcellular location">
    <subcellularLocation>
        <location evidence="1">Cell inner membrane</location>
        <topology evidence="1">Peripheral membrane protein</topology>
    </subcellularLocation>
</comment>
<comment type="similarity">
    <text evidence="1">Belongs to the ATPase alpha/beta chains family.</text>
</comment>